<reference key="1">
    <citation type="journal article" date="2005" name="DNA Res.">
        <title>Complete nucleotide sequence of the chloroplast genome from the Tasmanian blue gum, Eucalyptus globulus (Myrtaceae).</title>
        <authorList>
            <person name="Steane D.A."/>
        </authorList>
    </citation>
    <scope>NUCLEOTIDE SEQUENCE [LARGE SCALE GENOMIC DNA]</scope>
</reference>
<geneLocation type="chloroplast"/>
<organism>
    <name type="scientific">Eucalyptus globulus subsp. globulus</name>
    <name type="common">Tasmanian blue gum</name>
    <dbReference type="NCBI Taxonomy" id="71271"/>
    <lineage>
        <taxon>Eukaryota</taxon>
        <taxon>Viridiplantae</taxon>
        <taxon>Streptophyta</taxon>
        <taxon>Embryophyta</taxon>
        <taxon>Tracheophyta</taxon>
        <taxon>Spermatophyta</taxon>
        <taxon>Magnoliopsida</taxon>
        <taxon>eudicotyledons</taxon>
        <taxon>Gunneridae</taxon>
        <taxon>Pentapetalae</taxon>
        <taxon>rosids</taxon>
        <taxon>malvids</taxon>
        <taxon>Myrtales</taxon>
        <taxon>Myrtaceae</taxon>
        <taxon>Myrtoideae</taxon>
        <taxon>Eucalypteae</taxon>
        <taxon>Eucalyptus</taxon>
    </lineage>
</organism>
<evidence type="ECO:0000255" key="1">
    <source>
        <dbReference type="HAMAP-Rule" id="MF_00522"/>
    </source>
</evidence>
<protein>
    <recommendedName>
        <fullName evidence="1">Photosystem I reaction center subunit IX</fullName>
    </recommendedName>
    <alternativeName>
        <fullName evidence="1">PSI-J</fullName>
    </alternativeName>
</protein>
<gene>
    <name evidence="1" type="primary">psaJ</name>
</gene>
<accession>Q49KX9</accession>
<keyword id="KW-0150">Chloroplast</keyword>
<keyword id="KW-0472">Membrane</keyword>
<keyword id="KW-0602">Photosynthesis</keyword>
<keyword id="KW-0603">Photosystem I</keyword>
<keyword id="KW-0934">Plastid</keyword>
<keyword id="KW-0793">Thylakoid</keyword>
<keyword id="KW-0812">Transmembrane</keyword>
<keyword id="KW-1133">Transmembrane helix</keyword>
<feature type="chain" id="PRO_0000276056" description="Photosystem I reaction center subunit IX">
    <location>
        <begin position="1"/>
        <end position="44"/>
    </location>
</feature>
<feature type="transmembrane region" description="Helical" evidence="1">
    <location>
        <begin position="7"/>
        <end position="27"/>
    </location>
</feature>
<proteinExistence type="inferred from homology"/>
<comment type="function">
    <text evidence="1">May help in the organization of the PsaE and PsaF subunits.</text>
</comment>
<comment type="subcellular location">
    <subcellularLocation>
        <location evidence="1">Plastid</location>
        <location evidence="1">Chloroplast thylakoid membrane</location>
        <topology evidence="1">Single-pass membrane protein</topology>
    </subcellularLocation>
</comment>
<comment type="similarity">
    <text evidence="1">Belongs to the PsaJ family.</text>
</comment>
<name>PSAJ_EUCGG</name>
<dbReference type="EMBL" id="AY780259">
    <property type="protein sequence ID" value="AAX21048.1"/>
    <property type="molecule type" value="Genomic_DNA"/>
</dbReference>
<dbReference type="RefSeq" id="YP_636318.1">
    <property type="nucleotide sequence ID" value="NC_008115.1"/>
</dbReference>
<dbReference type="SMR" id="Q49KX9"/>
<dbReference type="GeneID" id="4108404"/>
<dbReference type="GO" id="GO:0009535">
    <property type="term" value="C:chloroplast thylakoid membrane"/>
    <property type="evidence" value="ECO:0007669"/>
    <property type="project" value="UniProtKB-SubCell"/>
</dbReference>
<dbReference type="GO" id="GO:0009522">
    <property type="term" value="C:photosystem I"/>
    <property type="evidence" value="ECO:0007669"/>
    <property type="project" value="UniProtKB-KW"/>
</dbReference>
<dbReference type="GO" id="GO:0015979">
    <property type="term" value="P:photosynthesis"/>
    <property type="evidence" value="ECO:0007669"/>
    <property type="project" value="UniProtKB-UniRule"/>
</dbReference>
<dbReference type="FunFam" id="1.20.5.510:FF:000001">
    <property type="entry name" value="Photosystem I reaction center subunit IX"/>
    <property type="match status" value="1"/>
</dbReference>
<dbReference type="Gene3D" id="1.20.5.510">
    <property type="entry name" value="Single helix bin"/>
    <property type="match status" value="1"/>
</dbReference>
<dbReference type="HAMAP" id="MF_00522">
    <property type="entry name" value="PSI_PsaJ"/>
    <property type="match status" value="1"/>
</dbReference>
<dbReference type="InterPro" id="IPR002615">
    <property type="entry name" value="PSI_PsaJ"/>
</dbReference>
<dbReference type="InterPro" id="IPR036062">
    <property type="entry name" value="PSI_PsaJ_sf"/>
</dbReference>
<dbReference type="PANTHER" id="PTHR36082">
    <property type="match status" value="1"/>
</dbReference>
<dbReference type="PANTHER" id="PTHR36082:SF2">
    <property type="entry name" value="PHOTOSYSTEM I REACTION CENTER SUBUNIT IX"/>
    <property type="match status" value="1"/>
</dbReference>
<dbReference type="Pfam" id="PF01701">
    <property type="entry name" value="PSI_PsaJ"/>
    <property type="match status" value="1"/>
</dbReference>
<dbReference type="SUPFAM" id="SSF81544">
    <property type="entry name" value="Subunit IX of photosystem I reaction centre, PsaJ"/>
    <property type="match status" value="1"/>
</dbReference>
<sequence>MRDLKTYLSVAPVLSTLWFGALAGLLIEINRLFPDALTFPFFSF</sequence>